<reference key="1">
    <citation type="submission" date="2007-04" db="EMBL/GenBank/DDBJ databases">
        <authorList>
            <consortium name="NIH - Mammalian Gene Collection (MGC) project"/>
        </authorList>
    </citation>
    <scope>NUCLEOTIDE SEQUENCE [LARGE SCALE MRNA]</scope>
    <source>
        <strain>Hereford</strain>
        <tissue>Fetal muscle</tissue>
    </source>
</reference>
<name>YIPF7_BOVIN</name>
<gene>
    <name type="primary">YIPF7</name>
</gene>
<sequence length="255" mass="27477">MSNLGQFDSDFYQSNYTIDNQEQTCNDSNACGNLYGSRKQQASEQPQPAFVPAEMLASSGYSGQFFQPASNQDYYSPSSYIDSFEEEPPLLEELGINFDHIWQKTLTVLNPMKPADGSIMNETDLTGPILFCMALGATLLLAGKVQFGYVYGMSAIGCLGIHALLNLMSSSGVSYGCVASVLGYCLLPMVILSSCAIFFSLQGTFGTVSALVIIGWCSLSASKIFTSALAMEGQQLLIAYPCALLYGLFALVTVF</sequence>
<comment type="subcellular location">
    <subcellularLocation>
        <location evidence="2">Endoplasmic reticulum membrane</location>
        <topology evidence="1">Multi-pass membrane protein</topology>
    </subcellularLocation>
    <subcellularLocation>
        <location evidence="1">Golgi apparatus</location>
        <location evidence="1">cis-Golgi network membrane</location>
    </subcellularLocation>
    <subcellularLocation>
        <location evidence="1">Golgi apparatus</location>
        <location evidence="1">trans-Golgi network membrane</location>
    </subcellularLocation>
</comment>
<comment type="similarity">
    <text evidence="4">Belongs to the YIP1 family.</text>
</comment>
<evidence type="ECO:0000250" key="1">
    <source>
        <dbReference type="UniProtKB" id="Q8N8F6"/>
    </source>
</evidence>
<evidence type="ECO:0000250" key="2">
    <source>
        <dbReference type="UniProtKB" id="Q9JIM5"/>
    </source>
</evidence>
<evidence type="ECO:0000255" key="3"/>
<evidence type="ECO:0000305" key="4"/>
<organism>
    <name type="scientific">Bos taurus</name>
    <name type="common">Bovine</name>
    <dbReference type="NCBI Taxonomy" id="9913"/>
    <lineage>
        <taxon>Eukaryota</taxon>
        <taxon>Metazoa</taxon>
        <taxon>Chordata</taxon>
        <taxon>Craniata</taxon>
        <taxon>Vertebrata</taxon>
        <taxon>Euteleostomi</taxon>
        <taxon>Mammalia</taxon>
        <taxon>Eutheria</taxon>
        <taxon>Laurasiatheria</taxon>
        <taxon>Artiodactyla</taxon>
        <taxon>Ruminantia</taxon>
        <taxon>Pecora</taxon>
        <taxon>Bovidae</taxon>
        <taxon>Bovinae</taxon>
        <taxon>Bos</taxon>
    </lineage>
</organism>
<dbReference type="EMBL" id="BC140593">
    <property type="protein sequence ID" value="AAI40594.1"/>
    <property type="molecule type" value="mRNA"/>
</dbReference>
<dbReference type="RefSeq" id="NP_001096728.1">
    <property type="nucleotide sequence ID" value="NM_001103258.1"/>
</dbReference>
<dbReference type="RefSeq" id="XP_010804405.1">
    <property type="nucleotide sequence ID" value="XM_010806103.2"/>
</dbReference>
<dbReference type="FunCoup" id="A5D7K7">
    <property type="interactions" value="1421"/>
</dbReference>
<dbReference type="STRING" id="9913.ENSBTAP00000002096"/>
<dbReference type="PaxDb" id="9913-ENSBTAP00000056318"/>
<dbReference type="Ensembl" id="ENSBTAT00000002096.7">
    <property type="protein sequence ID" value="ENSBTAP00000002096.5"/>
    <property type="gene ID" value="ENSBTAG00000001603.7"/>
</dbReference>
<dbReference type="GeneID" id="522186"/>
<dbReference type="KEGG" id="bta:522186"/>
<dbReference type="CTD" id="285525"/>
<dbReference type="VEuPathDB" id="HostDB:ENSBTAG00000001603"/>
<dbReference type="VGNC" id="VGNC:37029">
    <property type="gene designation" value="YIPF7"/>
</dbReference>
<dbReference type="eggNOG" id="KOG3103">
    <property type="taxonomic scope" value="Eukaryota"/>
</dbReference>
<dbReference type="GeneTree" id="ENSGT00940000153168"/>
<dbReference type="HOGENOM" id="CLU_074741_2_0_1"/>
<dbReference type="InParanoid" id="A5D7K7"/>
<dbReference type="OMA" id="GYTGQFF"/>
<dbReference type="OrthoDB" id="440385at2759"/>
<dbReference type="Proteomes" id="UP000009136">
    <property type="component" value="Chromosome 6"/>
</dbReference>
<dbReference type="Bgee" id="ENSBTAG00000001603">
    <property type="expression patterns" value="Expressed in supraspinatus muscle and 49 other cell types or tissues"/>
</dbReference>
<dbReference type="GO" id="GO:0005801">
    <property type="term" value="C:cis-Golgi network"/>
    <property type="evidence" value="ECO:0007669"/>
    <property type="project" value="Ensembl"/>
</dbReference>
<dbReference type="GO" id="GO:0005789">
    <property type="term" value="C:endoplasmic reticulum membrane"/>
    <property type="evidence" value="ECO:0007669"/>
    <property type="project" value="UniProtKB-SubCell"/>
</dbReference>
<dbReference type="GO" id="GO:0005793">
    <property type="term" value="C:endoplasmic reticulum-Golgi intermediate compartment"/>
    <property type="evidence" value="ECO:0007669"/>
    <property type="project" value="Ensembl"/>
</dbReference>
<dbReference type="GO" id="GO:0005802">
    <property type="term" value="C:trans-Golgi network"/>
    <property type="evidence" value="ECO:0000318"/>
    <property type="project" value="GO_Central"/>
</dbReference>
<dbReference type="GO" id="GO:0006888">
    <property type="term" value="P:endoplasmic reticulum to Golgi vesicle-mediated transport"/>
    <property type="evidence" value="ECO:0000318"/>
    <property type="project" value="GO_Central"/>
</dbReference>
<dbReference type="GO" id="GO:0048280">
    <property type="term" value="P:vesicle fusion with Golgi apparatus"/>
    <property type="evidence" value="ECO:0000318"/>
    <property type="project" value="GO_Central"/>
</dbReference>
<dbReference type="InterPro" id="IPR045231">
    <property type="entry name" value="Yip1/4-like"/>
</dbReference>
<dbReference type="InterPro" id="IPR006977">
    <property type="entry name" value="Yip1_dom"/>
</dbReference>
<dbReference type="PANTHER" id="PTHR21236">
    <property type="entry name" value="GOLGI MEMBRANE PROTEIN YIP1"/>
    <property type="match status" value="1"/>
</dbReference>
<dbReference type="PANTHER" id="PTHR21236:SF5">
    <property type="entry name" value="PROTEIN YIPF7"/>
    <property type="match status" value="1"/>
</dbReference>
<dbReference type="Pfam" id="PF04893">
    <property type="entry name" value="Yip1"/>
    <property type="match status" value="1"/>
</dbReference>
<protein>
    <recommendedName>
        <fullName>Protein YIPF7</fullName>
    </recommendedName>
    <alternativeName>
        <fullName>YIP1 family member 7</fullName>
    </alternativeName>
</protein>
<proteinExistence type="evidence at transcript level"/>
<accession>A5D7K7</accession>
<feature type="chain" id="PRO_0000333006" description="Protein YIPF7">
    <location>
        <begin position="1"/>
        <end position="255"/>
    </location>
</feature>
<feature type="topological domain" description="Cytoplasmic" evidence="1">
    <location>
        <begin position="1"/>
        <end position="124"/>
    </location>
</feature>
<feature type="transmembrane region" description="Helical" evidence="3">
    <location>
        <begin position="125"/>
        <end position="145"/>
    </location>
</feature>
<feature type="topological domain" description="Lumenal" evidence="4">
    <location>
        <position position="146"/>
    </location>
</feature>
<feature type="transmembrane region" description="Helical" evidence="3">
    <location>
        <begin position="147"/>
        <end position="167"/>
    </location>
</feature>
<feature type="topological domain" description="Cytoplasmic" evidence="4">
    <location>
        <begin position="168"/>
        <end position="180"/>
    </location>
</feature>
<feature type="transmembrane region" description="Helical" evidence="3">
    <location>
        <begin position="181"/>
        <end position="201"/>
    </location>
</feature>
<feature type="topological domain" description="Lumenal" evidence="4">
    <location>
        <begin position="202"/>
        <end position="204"/>
    </location>
</feature>
<feature type="transmembrane region" description="Helical" evidence="3">
    <location>
        <begin position="205"/>
        <end position="225"/>
    </location>
</feature>
<feature type="topological domain" description="Cytoplasmic" evidence="4">
    <location>
        <begin position="226"/>
        <end position="234"/>
    </location>
</feature>
<feature type="transmembrane region" description="Helical" evidence="3">
    <location>
        <begin position="235"/>
        <end position="255"/>
    </location>
</feature>
<keyword id="KW-0256">Endoplasmic reticulum</keyword>
<keyword id="KW-0333">Golgi apparatus</keyword>
<keyword id="KW-0472">Membrane</keyword>
<keyword id="KW-1185">Reference proteome</keyword>
<keyword id="KW-0812">Transmembrane</keyword>
<keyword id="KW-1133">Transmembrane helix</keyword>